<reference key="1">
    <citation type="journal article" date="2007" name="BMC Genomics">
        <title>The dystrotelin, dystrophin and dystrobrevin superfamily: new paralogues and old isoforms.</title>
        <authorList>
            <person name="Jin H."/>
            <person name="Tan S."/>
            <person name="Hermanowski J."/>
            <person name="Boehm S."/>
            <person name="Pacheco S."/>
            <person name="McCauley J.M."/>
            <person name="Greener M.J."/>
            <person name="Hinits Y."/>
            <person name="Hughes S.M."/>
            <person name="Sharpe P.T."/>
            <person name="Roberts R.G."/>
        </authorList>
    </citation>
    <scope>NUCLEOTIDE SEQUENCE [MRNA]</scope>
    <scope>SUBCELLULAR LOCATION</scope>
    <scope>TISSUE SPECIFICITY</scope>
    <scope>DEVELOPMENTAL STAGE</scope>
</reference>
<reference key="2">
    <citation type="journal article" date="2009" name="PLoS Biol.">
        <title>Lineage-specific biology revealed by a finished genome assembly of the mouse.</title>
        <authorList>
            <person name="Church D.M."/>
            <person name="Goodstadt L."/>
            <person name="Hillier L.W."/>
            <person name="Zody M.C."/>
            <person name="Goldstein S."/>
            <person name="She X."/>
            <person name="Bult C.J."/>
            <person name="Agarwala R."/>
            <person name="Cherry J.L."/>
            <person name="DiCuccio M."/>
            <person name="Hlavina W."/>
            <person name="Kapustin Y."/>
            <person name="Meric P."/>
            <person name="Maglott D."/>
            <person name="Birtle Z."/>
            <person name="Marques A.C."/>
            <person name="Graves T."/>
            <person name="Zhou S."/>
            <person name="Teague B."/>
            <person name="Potamousis K."/>
            <person name="Churas C."/>
            <person name="Place M."/>
            <person name="Herschleb J."/>
            <person name="Runnheim R."/>
            <person name="Forrest D."/>
            <person name="Amos-Landgraf J."/>
            <person name="Schwartz D.C."/>
            <person name="Cheng Z."/>
            <person name="Lindblad-Toh K."/>
            <person name="Eichler E.E."/>
            <person name="Ponting C.P."/>
        </authorList>
    </citation>
    <scope>NUCLEOTIDE SEQUENCE [LARGE SCALE GENOMIC DNA]</scope>
    <source>
        <strain>C57BL/6J</strain>
    </source>
</reference>
<accession>A2CI98</accession>
<accession>Q5F254</accession>
<gene>
    <name type="primary">Dytn</name>
    <name type="synonym">Gm215</name>
</gene>
<dbReference type="EMBL" id="DQ443727">
    <property type="protein sequence ID" value="ABD98315.1"/>
    <property type="molecule type" value="mRNA"/>
</dbReference>
<dbReference type="EMBL" id="AL645534">
    <property type="status" value="NOT_ANNOTATED_CDS"/>
    <property type="molecule type" value="Genomic_DNA"/>
</dbReference>
<dbReference type="CCDS" id="CCDS35595.1"/>
<dbReference type="RefSeq" id="NP_001075127.1">
    <property type="nucleotide sequence ID" value="NM_001081658.1"/>
</dbReference>
<dbReference type="SMR" id="A2CI98"/>
<dbReference type="FunCoup" id="A2CI98">
    <property type="interactions" value="657"/>
</dbReference>
<dbReference type="STRING" id="10090.ENSMUSP00000087787"/>
<dbReference type="GlyGen" id="A2CI98">
    <property type="glycosylation" value="2 sites, 1 O-linked glycan (2 sites)"/>
</dbReference>
<dbReference type="iPTMnet" id="A2CI98"/>
<dbReference type="PhosphoSitePlus" id="A2CI98"/>
<dbReference type="jPOST" id="A2CI98"/>
<dbReference type="PaxDb" id="10090-ENSMUSP00000087787"/>
<dbReference type="ProteomicsDB" id="277428"/>
<dbReference type="Antibodypedia" id="67876">
    <property type="antibodies" value="66 antibodies from 12 providers"/>
</dbReference>
<dbReference type="Ensembl" id="ENSMUST00000090313.5">
    <property type="protein sequence ID" value="ENSMUSP00000087787.5"/>
    <property type="gene ID" value="ENSMUSG00000069085.6"/>
</dbReference>
<dbReference type="GeneID" id="241073"/>
<dbReference type="KEGG" id="mmu:241073"/>
<dbReference type="UCSC" id="uc007bgi.1">
    <property type="organism name" value="mouse"/>
</dbReference>
<dbReference type="AGR" id="MGI:2685061"/>
<dbReference type="CTD" id="391475"/>
<dbReference type="MGI" id="MGI:2685061">
    <property type="gene designation" value="Dytn"/>
</dbReference>
<dbReference type="VEuPathDB" id="HostDB:ENSMUSG00000069085"/>
<dbReference type="eggNOG" id="KOG4286">
    <property type="taxonomic scope" value="Eukaryota"/>
</dbReference>
<dbReference type="GeneTree" id="ENSGT00940000162403"/>
<dbReference type="HOGENOM" id="CLU_027773_0_0_1"/>
<dbReference type="InParanoid" id="A2CI98"/>
<dbReference type="OMA" id="FLSWVQS"/>
<dbReference type="OrthoDB" id="10014385at2759"/>
<dbReference type="PhylomeDB" id="A2CI98"/>
<dbReference type="TreeFam" id="TF326090"/>
<dbReference type="BioGRID-ORCS" id="241073">
    <property type="hits" value="1 hit in 78 CRISPR screens"/>
</dbReference>
<dbReference type="PRO" id="PR:A2CI98"/>
<dbReference type="Proteomes" id="UP000000589">
    <property type="component" value="Chromosome 1"/>
</dbReference>
<dbReference type="RNAct" id="A2CI98">
    <property type="molecule type" value="protein"/>
</dbReference>
<dbReference type="Bgee" id="ENSMUSG00000069085">
    <property type="expression patterns" value="Expressed in lens of camera-type eye and 3 other cell types or tissues"/>
</dbReference>
<dbReference type="GO" id="GO:0005886">
    <property type="term" value="C:plasma membrane"/>
    <property type="evidence" value="ECO:0007669"/>
    <property type="project" value="UniProtKB-SubCell"/>
</dbReference>
<dbReference type="GO" id="GO:0008270">
    <property type="term" value="F:zinc ion binding"/>
    <property type="evidence" value="ECO:0007669"/>
    <property type="project" value="UniProtKB-KW"/>
</dbReference>
<dbReference type="Gene3D" id="3.30.60.90">
    <property type="match status" value="1"/>
</dbReference>
<dbReference type="Gene3D" id="1.10.238.10">
    <property type="entry name" value="EF-hand"/>
    <property type="match status" value="1"/>
</dbReference>
<dbReference type="InterPro" id="IPR011992">
    <property type="entry name" value="EF-hand-dom_pair"/>
</dbReference>
<dbReference type="InterPro" id="IPR015153">
    <property type="entry name" value="EF-hand_dom_typ1"/>
</dbReference>
<dbReference type="InterPro" id="IPR015154">
    <property type="entry name" value="EF-hand_dom_typ2"/>
</dbReference>
<dbReference type="InterPro" id="IPR050774">
    <property type="entry name" value="KCMF1/Dystrophin"/>
</dbReference>
<dbReference type="InterPro" id="IPR000433">
    <property type="entry name" value="Znf_ZZ"/>
</dbReference>
<dbReference type="InterPro" id="IPR043145">
    <property type="entry name" value="Znf_ZZ_sf"/>
</dbReference>
<dbReference type="PANTHER" id="PTHR12268:SF18">
    <property type="entry name" value="DYSTROTELIN"/>
    <property type="match status" value="1"/>
</dbReference>
<dbReference type="PANTHER" id="PTHR12268">
    <property type="entry name" value="E3 UBIQUITIN-PROTEIN LIGASE KCMF1"/>
    <property type="match status" value="1"/>
</dbReference>
<dbReference type="Pfam" id="PF09068">
    <property type="entry name" value="EF-hand_2"/>
    <property type="match status" value="1"/>
</dbReference>
<dbReference type="Pfam" id="PF09069">
    <property type="entry name" value="EF-hand_3"/>
    <property type="match status" value="1"/>
</dbReference>
<dbReference type="Pfam" id="PF00569">
    <property type="entry name" value="ZZ"/>
    <property type="match status" value="1"/>
</dbReference>
<dbReference type="SMART" id="SM00291">
    <property type="entry name" value="ZnF_ZZ"/>
    <property type="match status" value="1"/>
</dbReference>
<dbReference type="SUPFAM" id="SSF47473">
    <property type="entry name" value="EF-hand"/>
    <property type="match status" value="2"/>
</dbReference>
<dbReference type="SUPFAM" id="SSF57850">
    <property type="entry name" value="RING/U-box"/>
    <property type="match status" value="1"/>
</dbReference>
<dbReference type="PROSITE" id="PS01357">
    <property type="entry name" value="ZF_ZZ_1"/>
    <property type="match status" value="1"/>
</dbReference>
<dbReference type="PROSITE" id="PS50135">
    <property type="entry name" value="ZF_ZZ_2"/>
    <property type="match status" value="1"/>
</dbReference>
<evidence type="ECO:0000255" key="1"/>
<evidence type="ECO:0000255" key="2">
    <source>
        <dbReference type="PROSITE-ProRule" id="PRU00228"/>
    </source>
</evidence>
<evidence type="ECO:0000269" key="3">
    <source>
    </source>
</evidence>
<feature type="chain" id="PRO_0000298935" description="Dystrotelin">
    <location>
        <begin position="1"/>
        <end position="653"/>
    </location>
</feature>
<feature type="zinc finger region" description="ZZ-type" evidence="2">
    <location>
        <begin position="223"/>
        <end position="279"/>
    </location>
</feature>
<feature type="coiled-coil region" evidence="1">
    <location>
        <begin position="384"/>
        <end position="411"/>
    </location>
</feature>
<feature type="binding site" evidence="2">
    <location>
        <position position="228"/>
    </location>
    <ligand>
        <name>Zn(2+)</name>
        <dbReference type="ChEBI" id="CHEBI:29105"/>
        <label>1</label>
    </ligand>
</feature>
<feature type="binding site" evidence="2">
    <location>
        <position position="231"/>
    </location>
    <ligand>
        <name>Zn(2+)</name>
        <dbReference type="ChEBI" id="CHEBI:29105"/>
        <label>1</label>
    </ligand>
</feature>
<feature type="binding site" evidence="2">
    <location>
        <position position="243"/>
    </location>
    <ligand>
        <name>Zn(2+)</name>
        <dbReference type="ChEBI" id="CHEBI:29105"/>
        <label>2</label>
    </ligand>
</feature>
<feature type="binding site" evidence="2">
    <location>
        <position position="246"/>
    </location>
    <ligand>
        <name>Zn(2+)</name>
        <dbReference type="ChEBI" id="CHEBI:29105"/>
        <label>2</label>
    </ligand>
</feature>
<feature type="binding site" evidence="2">
    <location>
        <position position="252"/>
    </location>
    <ligand>
        <name>Zn(2+)</name>
        <dbReference type="ChEBI" id="CHEBI:29105"/>
        <label>1</label>
    </ligand>
</feature>
<feature type="binding site" evidence="2">
    <location>
        <position position="255"/>
    </location>
    <ligand>
        <name>Zn(2+)</name>
        <dbReference type="ChEBI" id="CHEBI:29105"/>
        <label>1</label>
    </ligand>
</feature>
<feature type="binding site" evidence="2">
    <location>
        <position position="265"/>
    </location>
    <ligand>
        <name>Zn(2+)</name>
        <dbReference type="ChEBI" id="CHEBI:29105"/>
        <label>2</label>
    </ligand>
</feature>
<feature type="binding site" evidence="2">
    <location>
        <position position="269"/>
    </location>
    <ligand>
        <name>Zn(2+)</name>
        <dbReference type="ChEBI" id="CHEBI:29105"/>
        <label>2</label>
    </ligand>
</feature>
<keyword id="KW-1003">Cell membrane</keyword>
<keyword id="KW-0175">Coiled coil</keyword>
<keyword id="KW-0472">Membrane</keyword>
<keyword id="KW-0479">Metal-binding</keyword>
<keyword id="KW-1185">Reference proteome</keyword>
<keyword id="KW-0862">Zinc</keyword>
<keyword id="KW-0863">Zinc-finger</keyword>
<proteinExistence type="evidence at transcript level"/>
<sequence>MDPSKQGTLNRVENSVYRTAFKLRSVQTLCQLDLMDSFLIQQVLWRGRSGESTETSISVQQLFQELRELFQRTGMGNAAQVHPRAPELTLSLLMAMFDRTGSGILKRQPVAAALVALSGDSPLTKYRAFFQLYAEKNRRGDDSQARMTRRVLRALLTDLQQIPTVVGESYTLRPVESAIHSCFRGVLSSGIKEEKFLSWAQSEPLVLLWLPTCYRLSAAETVTHPVRCSVCRTFPIIGLRYHCLKCLDFDICELCFLSGLHKNSHEKSHTVMEECVQMSATENTKLLFRSLRNNLPQKRQRVGAVGRQWLLDQLASRDSASHGPARLCLQYKCPKAPGYASSRRAVETAATGVLCQRPSPALQGNHNRHGQTIVNIKNELWRTRDSLNTLLRERRLLRKQLHRYKQKLQGTYALQEEQNCRFETKIRELTTNQDNLWTKLQQMRRDLQAMLQPLHPSSSPQTTASKIFHSLPDDGIRRGGDSSHIKRVTRDGPEWELLPNSAKVDRKHKCQASSGKALPDSEPQEIILQSTRKQNHPQKMLSKVHSSPSAHQQDTLQIPPTEVKIPAQTLSAGKEMESCSEKRNNLEDEELQALLPRLLDAFDLDSPTGLQPLMDMELYGRAQQVCRAFSVLVDQITLPTWSEEESRLKGPLV</sequence>
<organism>
    <name type="scientific">Mus musculus</name>
    <name type="common">Mouse</name>
    <dbReference type="NCBI Taxonomy" id="10090"/>
    <lineage>
        <taxon>Eukaryota</taxon>
        <taxon>Metazoa</taxon>
        <taxon>Chordata</taxon>
        <taxon>Craniata</taxon>
        <taxon>Vertebrata</taxon>
        <taxon>Euteleostomi</taxon>
        <taxon>Mammalia</taxon>
        <taxon>Eutheria</taxon>
        <taxon>Euarchontoglires</taxon>
        <taxon>Glires</taxon>
        <taxon>Rodentia</taxon>
        <taxon>Myomorpha</taxon>
        <taxon>Muroidea</taxon>
        <taxon>Muridae</taxon>
        <taxon>Murinae</taxon>
        <taxon>Mus</taxon>
        <taxon>Mus</taxon>
    </lineage>
</organism>
<name>DYTN_MOUSE</name>
<comment type="subcellular location">
    <subcellularLocation>
        <location evidence="3">Cell membrane</location>
    </subcellularLocation>
</comment>
<comment type="tissue specificity">
    <text evidence="3">Strongly expressed in the nervous and muscular tissues.</text>
</comment>
<comment type="developmental stage">
    <text evidence="3">At 10.5 dpc, expressed largely in the brain and neural tube.</text>
</comment>
<protein>
    <recommendedName>
        <fullName>Dystrotelin</fullName>
    </recommendedName>
</protein>